<protein>
    <recommendedName>
        <fullName>Metalloreductase STEAP2</fullName>
        <ecNumber>1.16.1.-</ecNumber>
    </recommendedName>
    <alternativeName>
        <fullName>Six-transmembrane epithelial antigen of prostate 2</fullName>
    </alternativeName>
</protein>
<feature type="chain" id="PRO_0000191698" description="Metalloreductase STEAP2">
    <location>
        <begin position="1"/>
        <end position="489"/>
    </location>
</feature>
<feature type="transmembrane region" description="Helical" evidence="3">
    <location>
        <begin position="207"/>
        <end position="227"/>
    </location>
</feature>
<feature type="transmembrane region" description="Helical" evidence="3">
    <location>
        <begin position="258"/>
        <end position="278"/>
    </location>
</feature>
<feature type="transmembrane region" description="Helical" evidence="3">
    <location>
        <begin position="304"/>
        <end position="324"/>
    </location>
</feature>
<feature type="transmembrane region" description="Helical" evidence="3">
    <location>
        <begin position="358"/>
        <end position="378"/>
    </location>
</feature>
<feature type="transmembrane region" description="Helical" evidence="3">
    <location>
        <begin position="392"/>
        <end position="412"/>
    </location>
</feature>
<feature type="transmembrane region" description="Helical" evidence="3">
    <location>
        <begin position="431"/>
        <end position="451"/>
    </location>
</feature>
<feature type="domain" description="Ferric oxidoreductase">
    <location>
        <begin position="258"/>
        <end position="406"/>
    </location>
</feature>
<feature type="binding site" evidence="1">
    <location>
        <begin position="37"/>
        <end position="40"/>
    </location>
    <ligand>
        <name>NADP(+)</name>
        <dbReference type="ChEBI" id="CHEBI:58349"/>
    </ligand>
</feature>
<feature type="binding site" evidence="1">
    <location>
        <begin position="59"/>
        <end position="60"/>
    </location>
    <ligand>
        <name>NADP(+)</name>
        <dbReference type="ChEBI" id="CHEBI:58349"/>
    </ligand>
</feature>
<feature type="binding site" evidence="1">
    <location>
        <begin position="92"/>
        <end position="99"/>
    </location>
    <ligand>
        <name>NADP(+)</name>
        <dbReference type="ChEBI" id="CHEBI:58349"/>
    </ligand>
</feature>
<feature type="binding site" evidence="1">
    <location>
        <position position="117"/>
    </location>
    <ligand>
        <name>NADP(+)</name>
        <dbReference type="ChEBI" id="CHEBI:58349"/>
    </ligand>
</feature>
<feature type="binding site" evidence="1">
    <location>
        <position position="150"/>
    </location>
    <ligand>
        <name>NADP(+)</name>
        <dbReference type="ChEBI" id="CHEBI:58349"/>
    </ligand>
</feature>
<feature type="binding site" evidence="2">
    <location>
        <position position="151"/>
    </location>
    <ligand>
        <name>FAD</name>
        <dbReference type="ChEBI" id="CHEBI:57692"/>
    </ligand>
</feature>
<feature type="binding site" evidence="2">
    <location>
        <position position="159"/>
    </location>
    <ligand>
        <name>FAD</name>
        <dbReference type="ChEBI" id="CHEBI:57692"/>
    </ligand>
</feature>
<feature type="binding site" evidence="1">
    <location>
        <position position="228"/>
    </location>
    <ligand>
        <name>Fe(3+)</name>
        <dbReference type="ChEBI" id="CHEBI:29034"/>
    </ligand>
</feature>
<feature type="binding site" evidence="2">
    <location>
        <position position="280"/>
    </location>
    <ligand>
        <name>FAD</name>
        <dbReference type="ChEBI" id="CHEBI:57692"/>
    </ligand>
</feature>
<feature type="binding site" evidence="2">
    <location>
        <position position="301"/>
    </location>
    <ligand>
        <name>FAD</name>
        <dbReference type="ChEBI" id="CHEBI:57692"/>
    </ligand>
</feature>
<feature type="binding site" description="axial binding residue" evidence="2">
    <location>
        <position position="315"/>
    </location>
    <ligand>
        <name>heme b</name>
        <dbReference type="ChEBI" id="CHEBI:60344"/>
    </ligand>
    <ligandPart>
        <name>Fe</name>
        <dbReference type="ChEBI" id="CHEBI:18248"/>
    </ligandPart>
</feature>
<feature type="binding site" evidence="1">
    <location>
        <position position="318"/>
    </location>
    <ligand>
        <name>Fe(3+)</name>
        <dbReference type="ChEBI" id="CHEBI:29034"/>
    </ligand>
</feature>
<feature type="binding site" evidence="2">
    <location>
        <position position="377"/>
    </location>
    <ligand>
        <name>FAD</name>
        <dbReference type="ChEBI" id="CHEBI:57692"/>
    </ligand>
</feature>
<feature type="binding site" evidence="2">
    <location>
        <position position="394"/>
    </location>
    <ligand>
        <name>FAD</name>
        <dbReference type="ChEBI" id="CHEBI:57692"/>
    </ligand>
</feature>
<feature type="binding site" description="axial binding residue" evidence="2">
    <location>
        <position position="408"/>
    </location>
    <ligand>
        <name>heme b</name>
        <dbReference type="ChEBI" id="CHEBI:60344"/>
    </ligand>
    <ligandPart>
        <name>Fe</name>
        <dbReference type="ChEBI" id="CHEBI:18248"/>
    </ligandPart>
</feature>
<feature type="modified residue" description="Phosphoserine" evidence="7">
    <location>
        <position position="482"/>
    </location>
</feature>
<evidence type="ECO:0000250" key="1">
    <source>
        <dbReference type="UniProtKB" id="Q658P3"/>
    </source>
</evidence>
<evidence type="ECO:0000250" key="2">
    <source>
        <dbReference type="UniProtKB" id="Q687X5"/>
    </source>
</evidence>
<evidence type="ECO:0000255" key="3"/>
<evidence type="ECO:0000269" key="4">
    <source>
    </source>
</evidence>
<evidence type="ECO:0000305" key="5"/>
<evidence type="ECO:0000305" key="6">
    <source>
    </source>
</evidence>
<evidence type="ECO:0007744" key="7">
    <source>
    </source>
</evidence>
<name>STEA2_MOUSE</name>
<organism>
    <name type="scientific">Mus musculus</name>
    <name type="common">Mouse</name>
    <dbReference type="NCBI Taxonomy" id="10090"/>
    <lineage>
        <taxon>Eukaryota</taxon>
        <taxon>Metazoa</taxon>
        <taxon>Chordata</taxon>
        <taxon>Craniata</taxon>
        <taxon>Vertebrata</taxon>
        <taxon>Euteleostomi</taxon>
        <taxon>Mammalia</taxon>
        <taxon>Eutheria</taxon>
        <taxon>Euarchontoglires</taxon>
        <taxon>Glires</taxon>
        <taxon>Rodentia</taxon>
        <taxon>Myomorpha</taxon>
        <taxon>Muroidea</taxon>
        <taxon>Muridae</taxon>
        <taxon>Murinae</taxon>
        <taxon>Mus</taxon>
        <taxon>Mus</taxon>
    </lineage>
</organism>
<proteinExistence type="evidence at protein level"/>
<sequence length="489" mass="55760">MESISMMGSPKSLETFLPNGINGIKDARQVTVGVIGSGDFAKSLTIRLIRCGYHVVIGSRNPKFASEFFPHVVDVTHHEDALTKTNIIFVAIHREHYTSLWDLRHLLVGKILIDVSNNMRVNQYPESNAEYLASLFPDSLIVKGFNVISAWALQLGPKDASRQVYICSNNIQARQQVIELARQLNFIPVDLGSLSSAKEIENLPLRLFTLWRGPVVVAISLATFFFLYSFVRDVIHPYARNQQSDFYKIPIEIVNKTLPIVAITLLSLVYLAGLLAAAYQLYYGTKYRRFPPWLDTWLQCRKQLGLLSFFFAVVHVAYSLCLPMRRSERYLFLNMAYQQVHANIENAWNEEEVWRIEMYISFGIMSLGLLSLLAVTSIPSVSNALNWREFSFIQSTLGYVALLITTFHVLIYGWKRAFAEEYYRFYTPPNFVLALVLPSIVILGKMILLLPCISRKLKRIKKGWEKSQFLDEGMGGAVPHLSPERVTVM</sequence>
<gene>
    <name type="primary">Steap2</name>
</gene>
<reference key="1">
    <citation type="journal article" date="2005" name="Science">
        <title>The transcriptional landscape of the mammalian genome.</title>
        <authorList>
            <person name="Carninci P."/>
            <person name="Kasukawa T."/>
            <person name="Katayama S."/>
            <person name="Gough J."/>
            <person name="Frith M.C."/>
            <person name="Maeda N."/>
            <person name="Oyama R."/>
            <person name="Ravasi T."/>
            <person name="Lenhard B."/>
            <person name="Wells C."/>
            <person name="Kodzius R."/>
            <person name="Shimokawa K."/>
            <person name="Bajic V.B."/>
            <person name="Brenner S.E."/>
            <person name="Batalov S."/>
            <person name="Forrest A.R."/>
            <person name="Zavolan M."/>
            <person name="Davis M.J."/>
            <person name="Wilming L.G."/>
            <person name="Aidinis V."/>
            <person name="Allen J.E."/>
            <person name="Ambesi-Impiombato A."/>
            <person name="Apweiler R."/>
            <person name="Aturaliya R.N."/>
            <person name="Bailey T.L."/>
            <person name="Bansal M."/>
            <person name="Baxter L."/>
            <person name="Beisel K.W."/>
            <person name="Bersano T."/>
            <person name="Bono H."/>
            <person name="Chalk A.M."/>
            <person name="Chiu K.P."/>
            <person name="Choudhary V."/>
            <person name="Christoffels A."/>
            <person name="Clutterbuck D.R."/>
            <person name="Crowe M.L."/>
            <person name="Dalla E."/>
            <person name="Dalrymple B.P."/>
            <person name="de Bono B."/>
            <person name="Della Gatta G."/>
            <person name="di Bernardo D."/>
            <person name="Down T."/>
            <person name="Engstrom P."/>
            <person name="Fagiolini M."/>
            <person name="Faulkner G."/>
            <person name="Fletcher C.F."/>
            <person name="Fukushima T."/>
            <person name="Furuno M."/>
            <person name="Futaki S."/>
            <person name="Gariboldi M."/>
            <person name="Georgii-Hemming P."/>
            <person name="Gingeras T.R."/>
            <person name="Gojobori T."/>
            <person name="Green R.E."/>
            <person name="Gustincich S."/>
            <person name="Harbers M."/>
            <person name="Hayashi Y."/>
            <person name="Hensch T.K."/>
            <person name="Hirokawa N."/>
            <person name="Hill D."/>
            <person name="Huminiecki L."/>
            <person name="Iacono M."/>
            <person name="Ikeo K."/>
            <person name="Iwama A."/>
            <person name="Ishikawa T."/>
            <person name="Jakt M."/>
            <person name="Kanapin A."/>
            <person name="Katoh M."/>
            <person name="Kawasawa Y."/>
            <person name="Kelso J."/>
            <person name="Kitamura H."/>
            <person name="Kitano H."/>
            <person name="Kollias G."/>
            <person name="Krishnan S.P."/>
            <person name="Kruger A."/>
            <person name="Kummerfeld S.K."/>
            <person name="Kurochkin I.V."/>
            <person name="Lareau L.F."/>
            <person name="Lazarevic D."/>
            <person name="Lipovich L."/>
            <person name="Liu J."/>
            <person name="Liuni S."/>
            <person name="McWilliam S."/>
            <person name="Madan Babu M."/>
            <person name="Madera M."/>
            <person name="Marchionni L."/>
            <person name="Matsuda H."/>
            <person name="Matsuzawa S."/>
            <person name="Miki H."/>
            <person name="Mignone F."/>
            <person name="Miyake S."/>
            <person name="Morris K."/>
            <person name="Mottagui-Tabar S."/>
            <person name="Mulder N."/>
            <person name="Nakano N."/>
            <person name="Nakauchi H."/>
            <person name="Ng P."/>
            <person name="Nilsson R."/>
            <person name="Nishiguchi S."/>
            <person name="Nishikawa S."/>
            <person name="Nori F."/>
            <person name="Ohara O."/>
            <person name="Okazaki Y."/>
            <person name="Orlando V."/>
            <person name="Pang K.C."/>
            <person name="Pavan W.J."/>
            <person name="Pavesi G."/>
            <person name="Pesole G."/>
            <person name="Petrovsky N."/>
            <person name="Piazza S."/>
            <person name="Reed J."/>
            <person name="Reid J.F."/>
            <person name="Ring B.Z."/>
            <person name="Ringwald M."/>
            <person name="Rost B."/>
            <person name="Ruan Y."/>
            <person name="Salzberg S.L."/>
            <person name="Sandelin A."/>
            <person name="Schneider C."/>
            <person name="Schoenbach C."/>
            <person name="Sekiguchi K."/>
            <person name="Semple C.A."/>
            <person name="Seno S."/>
            <person name="Sessa L."/>
            <person name="Sheng Y."/>
            <person name="Shibata Y."/>
            <person name="Shimada H."/>
            <person name="Shimada K."/>
            <person name="Silva D."/>
            <person name="Sinclair B."/>
            <person name="Sperling S."/>
            <person name="Stupka E."/>
            <person name="Sugiura K."/>
            <person name="Sultana R."/>
            <person name="Takenaka Y."/>
            <person name="Taki K."/>
            <person name="Tammoja K."/>
            <person name="Tan S.L."/>
            <person name="Tang S."/>
            <person name="Taylor M.S."/>
            <person name="Tegner J."/>
            <person name="Teichmann S.A."/>
            <person name="Ueda H.R."/>
            <person name="van Nimwegen E."/>
            <person name="Verardo R."/>
            <person name="Wei C.L."/>
            <person name="Yagi K."/>
            <person name="Yamanishi H."/>
            <person name="Zabarovsky E."/>
            <person name="Zhu S."/>
            <person name="Zimmer A."/>
            <person name="Hide W."/>
            <person name="Bult C."/>
            <person name="Grimmond S.M."/>
            <person name="Teasdale R.D."/>
            <person name="Liu E.T."/>
            <person name="Brusic V."/>
            <person name="Quackenbush J."/>
            <person name="Wahlestedt C."/>
            <person name="Mattick J.S."/>
            <person name="Hume D.A."/>
            <person name="Kai C."/>
            <person name="Sasaki D."/>
            <person name="Tomaru Y."/>
            <person name="Fukuda S."/>
            <person name="Kanamori-Katayama M."/>
            <person name="Suzuki M."/>
            <person name="Aoki J."/>
            <person name="Arakawa T."/>
            <person name="Iida J."/>
            <person name="Imamura K."/>
            <person name="Itoh M."/>
            <person name="Kato T."/>
            <person name="Kawaji H."/>
            <person name="Kawagashira N."/>
            <person name="Kawashima T."/>
            <person name="Kojima M."/>
            <person name="Kondo S."/>
            <person name="Konno H."/>
            <person name="Nakano K."/>
            <person name="Ninomiya N."/>
            <person name="Nishio T."/>
            <person name="Okada M."/>
            <person name="Plessy C."/>
            <person name="Shibata K."/>
            <person name="Shiraki T."/>
            <person name="Suzuki S."/>
            <person name="Tagami M."/>
            <person name="Waki K."/>
            <person name="Watahiki A."/>
            <person name="Okamura-Oho Y."/>
            <person name="Suzuki H."/>
            <person name="Kawai J."/>
            <person name="Hayashizaki Y."/>
        </authorList>
    </citation>
    <scope>NUCLEOTIDE SEQUENCE [LARGE SCALE MRNA]</scope>
    <source>
        <strain>C57BL/6J</strain>
        <tissue>Epididymis</tissue>
        <tissue>Head</tissue>
    </source>
</reference>
<reference key="2">
    <citation type="journal article" date="2006" name="Blood">
        <title>The Steap proteins are metalloreductases.</title>
        <authorList>
            <person name="Ohgami R.S."/>
            <person name="Campagna D.R."/>
            <person name="McDonald A."/>
            <person name="Fleming M.D."/>
        </authorList>
    </citation>
    <scope>FUNCTION</scope>
    <scope>CATALYTIC ACTIVITY</scope>
    <scope>SUBCELLULAR LOCATION</scope>
</reference>
<reference key="3">
    <citation type="journal article" date="2010" name="Cell">
        <title>A tissue-specific atlas of mouse protein phosphorylation and expression.</title>
        <authorList>
            <person name="Huttlin E.L."/>
            <person name="Jedrychowski M.P."/>
            <person name="Elias J.E."/>
            <person name="Goswami T."/>
            <person name="Rad R."/>
            <person name="Beausoleil S.A."/>
            <person name="Villen J."/>
            <person name="Haas W."/>
            <person name="Sowa M.E."/>
            <person name="Gygi S.P."/>
        </authorList>
    </citation>
    <scope>PHOSPHORYLATION [LARGE SCALE ANALYSIS] AT SER-482</scope>
    <scope>IDENTIFICATION BY MASS SPECTROMETRY [LARGE SCALE ANALYSIS]</scope>
    <source>
        <tissue>Brain</tissue>
    </source>
</reference>
<comment type="function">
    <text evidence="2 4">Integral membrane protein that functions as a NADPH-dependent ferric-chelate reductase, using NADPH from one side of the membrane to reduce a Fe(3+) chelate that is bound on the other side of the membrane (PubMed:16609065). Mediates sequential transmembrane electron transfer from NADPH to FAD and onto heme, and finally to the Fe(3+) chelate (By similarity). Can also reduce Cu(2+) to Cu(1+) (PubMed:16609065).</text>
</comment>
<comment type="catalytic activity">
    <reaction evidence="4">
        <text>2 Fe(2+) + NADP(+) + H(+) = 2 Fe(3+) + NADPH</text>
        <dbReference type="Rhea" id="RHEA:71767"/>
        <dbReference type="ChEBI" id="CHEBI:15378"/>
        <dbReference type="ChEBI" id="CHEBI:29033"/>
        <dbReference type="ChEBI" id="CHEBI:29034"/>
        <dbReference type="ChEBI" id="CHEBI:57783"/>
        <dbReference type="ChEBI" id="CHEBI:58349"/>
    </reaction>
    <physiologicalReaction direction="right-to-left" evidence="6">
        <dbReference type="Rhea" id="RHEA:71769"/>
    </physiologicalReaction>
</comment>
<comment type="catalytic activity">
    <reaction evidence="4">
        <text>2 Cu(+) + NADP(+) + H(+) = 2 Cu(2+) + NADPH</text>
        <dbReference type="Rhea" id="RHEA:71771"/>
        <dbReference type="ChEBI" id="CHEBI:15378"/>
        <dbReference type="ChEBI" id="CHEBI:29036"/>
        <dbReference type="ChEBI" id="CHEBI:49552"/>
        <dbReference type="ChEBI" id="CHEBI:57783"/>
        <dbReference type="ChEBI" id="CHEBI:58349"/>
    </reaction>
    <physiologicalReaction direction="right-to-left" evidence="6">
        <dbReference type="Rhea" id="RHEA:71773"/>
    </physiologicalReaction>
</comment>
<comment type="cofactor">
    <cofactor evidence="2">
        <name>FAD</name>
        <dbReference type="ChEBI" id="CHEBI:57692"/>
    </cofactor>
</comment>
<comment type="cofactor">
    <cofactor evidence="2">
        <name>heme b</name>
        <dbReference type="ChEBI" id="CHEBI:60344"/>
    </cofactor>
</comment>
<comment type="subcellular location">
    <subcellularLocation>
        <location evidence="4">Cell membrane</location>
        <topology evidence="3">Multi-pass membrane protein</topology>
    </subcellularLocation>
    <subcellularLocation>
        <location evidence="4">Endosome membrane</location>
        <topology evidence="3">Multi-pass membrane protein</topology>
    </subcellularLocation>
</comment>
<comment type="similarity">
    <text evidence="5">Belongs to the STEAP family.</text>
</comment>
<dbReference type="EC" id="1.16.1.-"/>
<dbReference type="EMBL" id="AK052981">
    <property type="protein sequence ID" value="BAC35230.1"/>
    <property type="molecule type" value="mRNA"/>
</dbReference>
<dbReference type="EMBL" id="AK162343">
    <property type="protein sequence ID" value="BAE36864.1"/>
    <property type="molecule type" value="mRNA"/>
</dbReference>
<dbReference type="CCDS" id="CCDS39007.1"/>
<dbReference type="RefSeq" id="NP_001096626.1">
    <property type="nucleotide sequence ID" value="NM_001103156.2"/>
</dbReference>
<dbReference type="RefSeq" id="NP_001096627.1">
    <property type="nucleotide sequence ID" value="NM_001103157.2"/>
</dbReference>
<dbReference type="RefSeq" id="NP_001272398.1">
    <property type="nucleotide sequence ID" value="NM_001285469.1"/>
</dbReference>
<dbReference type="RefSeq" id="NP_001272399.1">
    <property type="nucleotide sequence ID" value="NM_001285470.1"/>
</dbReference>
<dbReference type="RefSeq" id="NP_083010.2">
    <property type="nucleotide sequence ID" value="NM_028734.5"/>
</dbReference>
<dbReference type="RefSeq" id="XP_011238977.1">
    <property type="nucleotide sequence ID" value="XM_011240675.4"/>
</dbReference>
<dbReference type="RefSeq" id="XP_030110704.1">
    <property type="nucleotide sequence ID" value="XM_030254844.2"/>
</dbReference>
<dbReference type="SMR" id="Q8BWB6"/>
<dbReference type="BioGRID" id="216452">
    <property type="interactions" value="1"/>
</dbReference>
<dbReference type="FunCoup" id="Q8BWB6">
    <property type="interactions" value="861"/>
</dbReference>
<dbReference type="STRING" id="10090.ENSMUSP00000111086"/>
<dbReference type="GlyGen" id="Q8BWB6">
    <property type="glycosylation" value="1 site"/>
</dbReference>
<dbReference type="iPTMnet" id="Q8BWB6"/>
<dbReference type="PhosphoSitePlus" id="Q8BWB6"/>
<dbReference type="PaxDb" id="10090-ENSMUSP00000111084"/>
<dbReference type="ProteomicsDB" id="257488"/>
<dbReference type="Pumba" id="Q8BWB6"/>
<dbReference type="Antibodypedia" id="29828">
    <property type="antibodies" value="203 antibodies from 31 providers"/>
</dbReference>
<dbReference type="Ensembl" id="ENSMUST00000015797.11">
    <property type="protein sequence ID" value="ENSMUSP00000015797.5"/>
    <property type="gene ID" value="ENSMUSG00000015653.14"/>
</dbReference>
<dbReference type="Ensembl" id="ENSMUST00000115424.9">
    <property type="protein sequence ID" value="ENSMUSP00000111084.3"/>
    <property type="gene ID" value="ENSMUSG00000015653.14"/>
</dbReference>
<dbReference type="Ensembl" id="ENSMUST00000115425.9">
    <property type="protein sequence ID" value="ENSMUSP00000111085.3"/>
    <property type="gene ID" value="ENSMUSG00000015653.14"/>
</dbReference>
<dbReference type="Ensembl" id="ENSMUST00000115426.9">
    <property type="protein sequence ID" value="ENSMUSP00000111086.3"/>
    <property type="gene ID" value="ENSMUSG00000015653.14"/>
</dbReference>
<dbReference type="Ensembl" id="ENSMUST00000164219.8">
    <property type="protein sequence ID" value="ENSMUSP00000132501.2"/>
    <property type="gene ID" value="ENSMUSG00000015653.14"/>
</dbReference>
<dbReference type="GeneID" id="74051"/>
<dbReference type="KEGG" id="mmu:74051"/>
<dbReference type="UCSC" id="uc008wiw.3">
    <property type="organism name" value="mouse"/>
</dbReference>
<dbReference type="AGR" id="MGI:1921301"/>
<dbReference type="CTD" id="261729"/>
<dbReference type="MGI" id="MGI:1921301">
    <property type="gene designation" value="Steap2"/>
</dbReference>
<dbReference type="VEuPathDB" id="HostDB:ENSMUSG00000015653"/>
<dbReference type="eggNOG" id="ENOG502QVSJ">
    <property type="taxonomic scope" value="Eukaryota"/>
</dbReference>
<dbReference type="GeneTree" id="ENSGT00390000008042"/>
<dbReference type="InParanoid" id="Q8BWB6"/>
<dbReference type="OMA" id="HPYVKNQ"/>
<dbReference type="OrthoDB" id="550646at2759"/>
<dbReference type="PhylomeDB" id="Q8BWB6"/>
<dbReference type="TreeFam" id="TF332031"/>
<dbReference type="BioGRID-ORCS" id="74051">
    <property type="hits" value="0 hits in 76 CRISPR screens"/>
</dbReference>
<dbReference type="ChiTaRS" id="Steap2">
    <property type="organism name" value="mouse"/>
</dbReference>
<dbReference type="PRO" id="PR:Q8BWB6"/>
<dbReference type="Proteomes" id="UP000000589">
    <property type="component" value="Chromosome 5"/>
</dbReference>
<dbReference type="RNAct" id="Q8BWB6">
    <property type="molecule type" value="protein"/>
</dbReference>
<dbReference type="Bgee" id="ENSMUSG00000015653">
    <property type="expression patterns" value="Expressed in choroid plexus epithelium and 207 other cell types or tissues"/>
</dbReference>
<dbReference type="ExpressionAtlas" id="Q8BWB6">
    <property type="expression patterns" value="baseline and differential"/>
</dbReference>
<dbReference type="GO" id="GO:0005829">
    <property type="term" value="C:cytosol"/>
    <property type="evidence" value="ECO:0000250"/>
    <property type="project" value="UniProtKB"/>
</dbReference>
<dbReference type="GO" id="GO:0005769">
    <property type="term" value="C:early endosome"/>
    <property type="evidence" value="ECO:0000250"/>
    <property type="project" value="UniProtKB"/>
</dbReference>
<dbReference type="GO" id="GO:0005768">
    <property type="term" value="C:endosome"/>
    <property type="evidence" value="ECO:0000314"/>
    <property type="project" value="MGI"/>
</dbReference>
<dbReference type="GO" id="GO:0010008">
    <property type="term" value="C:endosome membrane"/>
    <property type="evidence" value="ECO:0007669"/>
    <property type="project" value="UniProtKB-SubCell"/>
</dbReference>
<dbReference type="GO" id="GO:0000139">
    <property type="term" value="C:Golgi membrane"/>
    <property type="evidence" value="ECO:0000250"/>
    <property type="project" value="UniProtKB"/>
</dbReference>
<dbReference type="GO" id="GO:0005886">
    <property type="term" value="C:plasma membrane"/>
    <property type="evidence" value="ECO:0000314"/>
    <property type="project" value="MGI"/>
</dbReference>
<dbReference type="GO" id="GO:0030140">
    <property type="term" value="C:trans-Golgi network transport vesicle"/>
    <property type="evidence" value="ECO:0000250"/>
    <property type="project" value="UniProtKB"/>
</dbReference>
<dbReference type="GO" id="GO:0008823">
    <property type="term" value="F:cupric reductase (NADH) activity"/>
    <property type="evidence" value="ECO:0000314"/>
    <property type="project" value="MGI"/>
</dbReference>
<dbReference type="GO" id="GO:0052851">
    <property type="term" value="F:ferric-chelate reductase (NADPH) activity"/>
    <property type="evidence" value="ECO:0000314"/>
    <property type="project" value="MGI"/>
</dbReference>
<dbReference type="GO" id="GO:0046872">
    <property type="term" value="F:metal ion binding"/>
    <property type="evidence" value="ECO:0007669"/>
    <property type="project" value="UniProtKB-KW"/>
</dbReference>
<dbReference type="GO" id="GO:0015677">
    <property type="term" value="P:copper ion import"/>
    <property type="evidence" value="ECO:0000314"/>
    <property type="project" value="MGI"/>
</dbReference>
<dbReference type="GO" id="GO:0098705">
    <property type="term" value="P:copper ion import across plasma membrane"/>
    <property type="evidence" value="ECO:0000314"/>
    <property type="project" value="MGI"/>
</dbReference>
<dbReference type="GO" id="GO:0006897">
    <property type="term" value="P:endocytosis"/>
    <property type="evidence" value="ECO:0000250"/>
    <property type="project" value="UniProtKB"/>
</dbReference>
<dbReference type="GO" id="GO:0006893">
    <property type="term" value="P:Golgi to plasma membrane transport"/>
    <property type="evidence" value="ECO:0000250"/>
    <property type="project" value="UniProtKB"/>
</dbReference>
<dbReference type="GO" id="GO:0098706">
    <property type="term" value="P:iron ion import across cell outer membrane"/>
    <property type="evidence" value="ECO:0000314"/>
    <property type="project" value="MGI"/>
</dbReference>
<dbReference type="GO" id="GO:0098711">
    <property type="term" value="P:iron ion import across plasma membrane"/>
    <property type="evidence" value="ECO:0000314"/>
    <property type="project" value="MGI"/>
</dbReference>
<dbReference type="GO" id="GO:0045055">
    <property type="term" value="P:regulated exocytosis"/>
    <property type="evidence" value="ECO:0000250"/>
    <property type="project" value="UniProtKB"/>
</dbReference>
<dbReference type="GO" id="GO:0009725">
    <property type="term" value="P:response to hormone"/>
    <property type="evidence" value="ECO:0000250"/>
    <property type="project" value="UniProtKB"/>
</dbReference>
<dbReference type="FunFam" id="3.40.50.720:FF:000051">
    <property type="entry name" value="STEAP2 metalloreductase"/>
    <property type="match status" value="1"/>
</dbReference>
<dbReference type="Gene3D" id="3.40.50.720">
    <property type="entry name" value="NAD(P)-binding Rossmann-like Domain"/>
    <property type="match status" value="1"/>
</dbReference>
<dbReference type="InterPro" id="IPR013130">
    <property type="entry name" value="Fe3_Rdtase_TM_dom"/>
</dbReference>
<dbReference type="InterPro" id="IPR036291">
    <property type="entry name" value="NAD(P)-bd_dom_sf"/>
</dbReference>
<dbReference type="InterPro" id="IPR028939">
    <property type="entry name" value="P5C_Rdtase_cat_N"/>
</dbReference>
<dbReference type="InterPro" id="IPR051267">
    <property type="entry name" value="STEAP_metalloreductase"/>
</dbReference>
<dbReference type="PANTHER" id="PTHR14239">
    <property type="entry name" value="DUDULIN-RELATED"/>
    <property type="match status" value="1"/>
</dbReference>
<dbReference type="PANTHER" id="PTHR14239:SF6">
    <property type="entry name" value="METALLOREDUCTASE STEAP2"/>
    <property type="match status" value="1"/>
</dbReference>
<dbReference type="Pfam" id="PF03807">
    <property type="entry name" value="F420_oxidored"/>
    <property type="match status" value="1"/>
</dbReference>
<dbReference type="Pfam" id="PF01794">
    <property type="entry name" value="Ferric_reduct"/>
    <property type="match status" value="1"/>
</dbReference>
<dbReference type="SUPFAM" id="SSF51735">
    <property type="entry name" value="NAD(P)-binding Rossmann-fold domains"/>
    <property type="match status" value="1"/>
</dbReference>
<accession>Q8BWB6</accession>
<accession>Q3TS12</accession>
<keyword id="KW-1003">Cell membrane</keyword>
<keyword id="KW-0186">Copper</keyword>
<keyword id="KW-0249">Electron transport</keyword>
<keyword id="KW-0967">Endosome</keyword>
<keyword id="KW-0274">FAD</keyword>
<keyword id="KW-0285">Flavoprotein</keyword>
<keyword id="KW-0349">Heme</keyword>
<keyword id="KW-0406">Ion transport</keyword>
<keyword id="KW-0408">Iron</keyword>
<keyword id="KW-0410">Iron transport</keyword>
<keyword id="KW-0472">Membrane</keyword>
<keyword id="KW-0479">Metal-binding</keyword>
<keyword id="KW-0520">NAD</keyword>
<keyword id="KW-0521">NADP</keyword>
<keyword id="KW-0560">Oxidoreductase</keyword>
<keyword id="KW-0597">Phosphoprotein</keyword>
<keyword id="KW-1185">Reference proteome</keyword>
<keyword id="KW-0812">Transmembrane</keyword>
<keyword id="KW-1133">Transmembrane helix</keyword>
<keyword id="KW-0813">Transport</keyword>